<keyword id="KW-1015">Disulfide bond</keyword>
<keyword id="KW-0472">Membrane</keyword>
<keyword id="KW-1185">Reference proteome</keyword>
<keyword id="KW-0812">Transmembrane</keyword>
<keyword id="KW-1133">Transmembrane helix</keyword>
<feature type="propeptide" id="PRO_0000352667" evidence="2">
    <location>
        <begin position="1"/>
        <end position="20"/>
    </location>
</feature>
<feature type="chain" id="PRO_0000352668" description="Transmembrane gamma-carboxyglutamic acid protein 1">
    <location>
        <begin position="21"/>
        <end position="218"/>
    </location>
</feature>
<feature type="topological domain" description="Extracellular" evidence="2">
    <location>
        <begin position="21"/>
        <end position="80"/>
    </location>
</feature>
<feature type="transmembrane region" description="Helical" evidence="2">
    <location>
        <begin position="81"/>
        <end position="101"/>
    </location>
</feature>
<feature type="topological domain" description="Cytoplasmic" evidence="2">
    <location>
        <begin position="102"/>
        <end position="218"/>
    </location>
</feature>
<feature type="domain" description="Gla" evidence="3">
    <location>
        <begin position="20"/>
        <end position="66"/>
    </location>
</feature>
<feature type="region of interest" description="Disordered" evidence="4">
    <location>
        <begin position="160"/>
        <end position="192"/>
    </location>
</feature>
<feature type="compositionally biased region" description="Basic and acidic residues" evidence="4">
    <location>
        <begin position="182"/>
        <end position="192"/>
    </location>
</feature>
<feature type="disulfide bond" evidence="3">
    <location>
        <begin position="37"/>
        <end position="42"/>
    </location>
</feature>
<proteinExistence type="evidence at transcript level"/>
<protein>
    <recommendedName>
        <fullName>Transmembrane gamma-carboxyglutamic acid protein 1</fullName>
    </recommendedName>
    <alternativeName>
        <fullName>Proline-rich gamma-carboxyglutamic acid protein 1</fullName>
        <shortName>Proline-rich Gla protein 1</shortName>
    </alternativeName>
</protein>
<comment type="subcellular location">
    <subcellularLocation>
        <location evidence="5">Membrane</location>
        <topology evidence="5">Single-pass type I membrane protein</topology>
    </subcellularLocation>
</comment>
<comment type="PTM">
    <text evidence="1">Gla residues are produced after subsequent post-translational modifications of glutamate by a vitamin K-dependent gamma-carboxylase.</text>
</comment>
<accession>A7Z070</accession>
<sequence>MGRIFLTGEKANSVLKRYPRANGLFEEIRQGNIERECKEEVCTFEEAREAFENNEKTKEFWNTYTKAQQGESNRGSDWFQFYLTFPLIFGLFIILLVIFLIWRCFLRNKTRRQTVTESHIPFPQHLNIITTPPPPDEVFDNSGLSPGFLEYVVGRSDSVSTRLSNCDPPPTYEEATGQMNLRRSETEPHLDPPPEYEDIINSNSASAIAMVPVATTIK</sequence>
<evidence type="ECO:0000250" key="1"/>
<evidence type="ECO:0000255" key="2"/>
<evidence type="ECO:0000255" key="3">
    <source>
        <dbReference type="PROSITE-ProRule" id="PRU00463"/>
    </source>
</evidence>
<evidence type="ECO:0000256" key="4">
    <source>
        <dbReference type="SAM" id="MobiDB-lite"/>
    </source>
</evidence>
<evidence type="ECO:0000305" key="5"/>
<organism>
    <name type="scientific">Bos taurus</name>
    <name type="common">Bovine</name>
    <dbReference type="NCBI Taxonomy" id="9913"/>
    <lineage>
        <taxon>Eukaryota</taxon>
        <taxon>Metazoa</taxon>
        <taxon>Chordata</taxon>
        <taxon>Craniata</taxon>
        <taxon>Vertebrata</taxon>
        <taxon>Euteleostomi</taxon>
        <taxon>Mammalia</taxon>
        <taxon>Eutheria</taxon>
        <taxon>Laurasiatheria</taxon>
        <taxon>Artiodactyla</taxon>
        <taxon>Ruminantia</taxon>
        <taxon>Pecora</taxon>
        <taxon>Bovidae</taxon>
        <taxon>Bovinae</taxon>
        <taxon>Bos</taxon>
    </lineage>
</organism>
<gene>
    <name type="primary">PRRG1</name>
    <name type="synonym">TMG1</name>
</gene>
<name>TMG1_BOVIN</name>
<reference key="1">
    <citation type="submission" date="2007-09" db="EMBL/GenBank/DDBJ databases">
        <authorList>
            <consortium name="NIH - Mammalian Gene Collection (MGC) project"/>
        </authorList>
    </citation>
    <scope>NUCLEOTIDE SEQUENCE [LARGE SCALE MRNA]</scope>
    <source>
        <strain>Hereford</strain>
        <tissue>Fetal liver</tissue>
    </source>
</reference>
<dbReference type="EMBL" id="BC153268">
    <property type="protein sequence ID" value="AAI53269.1"/>
    <property type="molecule type" value="mRNA"/>
</dbReference>
<dbReference type="RefSeq" id="NP_001099110.1">
    <property type="nucleotide sequence ID" value="NM_001105640.1"/>
</dbReference>
<dbReference type="SMR" id="A7Z070"/>
<dbReference type="FunCoup" id="A7Z070">
    <property type="interactions" value="114"/>
</dbReference>
<dbReference type="STRING" id="9913.ENSBTAP00000072442"/>
<dbReference type="GeneID" id="785916"/>
<dbReference type="KEGG" id="bta:785916"/>
<dbReference type="CTD" id="5638"/>
<dbReference type="VEuPathDB" id="HostDB:ENSBTAG00000050233"/>
<dbReference type="InParanoid" id="A7Z070"/>
<dbReference type="OMA" id="HWGRDYH"/>
<dbReference type="OrthoDB" id="9942362at2759"/>
<dbReference type="Proteomes" id="UP000009136">
    <property type="component" value="Chromosome X"/>
</dbReference>
<dbReference type="Bgee" id="ENSBTAG00000050233">
    <property type="expression patterns" value="Expressed in spermatocyte and 99 other cell types or tissues"/>
</dbReference>
<dbReference type="GO" id="GO:0005615">
    <property type="term" value="C:extracellular space"/>
    <property type="evidence" value="ECO:0000318"/>
    <property type="project" value="GO_Central"/>
</dbReference>
<dbReference type="GO" id="GO:0016020">
    <property type="term" value="C:membrane"/>
    <property type="evidence" value="ECO:0007669"/>
    <property type="project" value="UniProtKB-SubCell"/>
</dbReference>
<dbReference type="GO" id="GO:0005509">
    <property type="term" value="F:calcium ion binding"/>
    <property type="evidence" value="ECO:0007669"/>
    <property type="project" value="InterPro"/>
</dbReference>
<dbReference type="GO" id="GO:0004252">
    <property type="term" value="F:serine-type endopeptidase activity"/>
    <property type="evidence" value="ECO:0000318"/>
    <property type="project" value="GO_Central"/>
</dbReference>
<dbReference type="GO" id="GO:0007596">
    <property type="term" value="P:blood coagulation"/>
    <property type="evidence" value="ECO:0000318"/>
    <property type="project" value="GO_Central"/>
</dbReference>
<dbReference type="FunFam" id="4.10.740.10:FF:000001">
    <property type="entry name" value="vitamin K-dependent protein S"/>
    <property type="match status" value="1"/>
</dbReference>
<dbReference type="Gene3D" id="4.10.740.10">
    <property type="entry name" value="Coagulation Factor IX"/>
    <property type="match status" value="1"/>
</dbReference>
<dbReference type="InterPro" id="IPR017857">
    <property type="entry name" value="Coagulation_fac-like_Gla_dom"/>
</dbReference>
<dbReference type="InterPro" id="IPR035972">
    <property type="entry name" value="GLA-like_dom_SF"/>
</dbReference>
<dbReference type="InterPro" id="IPR000294">
    <property type="entry name" value="GLA_domain"/>
</dbReference>
<dbReference type="InterPro" id="IPR050442">
    <property type="entry name" value="Peptidase_S1_coag_factors"/>
</dbReference>
<dbReference type="PANTHER" id="PTHR24278">
    <property type="entry name" value="COAGULATION FACTOR"/>
    <property type="match status" value="1"/>
</dbReference>
<dbReference type="PANTHER" id="PTHR24278:SF37">
    <property type="entry name" value="TRANSMEMBRANE GAMMA-CARBOXYGLUTAMIC ACID PROTEIN 1"/>
    <property type="match status" value="1"/>
</dbReference>
<dbReference type="Pfam" id="PF00594">
    <property type="entry name" value="Gla"/>
    <property type="match status" value="1"/>
</dbReference>
<dbReference type="PRINTS" id="PR00001">
    <property type="entry name" value="GLABLOOD"/>
</dbReference>
<dbReference type="SMART" id="SM00069">
    <property type="entry name" value="GLA"/>
    <property type="match status" value="1"/>
</dbReference>
<dbReference type="SUPFAM" id="SSF57630">
    <property type="entry name" value="GLA-domain"/>
    <property type="match status" value="1"/>
</dbReference>
<dbReference type="PROSITE" id="PS00011">
    <property type="entry name" value="GLA_1"/>
    <property type="match status" value="1"/>
</dbReference>
<dbReference type="PROSITE" id="PS50998">
    <property type="entry name" value="GLA_2"/>
    <property type="match status" value="1"/>
</dbReference>